<organism>
    <name type="scientific">Pseudothermotoga lettingae (strain ATCC BAA-301 / DSM 14385 / NBRC 107922 / TMO)</name>
    <name type="common">Thermotoga lettingae</name>
    <dbReference type="NCBI Taxonomy" id="416591"/>
    <lineage>
        <taxon>Bacteria</taxon>
        <taxon>Thermotogati</taxon>
        <taxon>Thermotogota</taxon>
        <taxon>Thermotogae</taxon>
        <taxon>Thermotogales</taxon>
        <taxon>Thermotogaceae</taxon>
        <taxon>Pseudothermotoga</taxon>
    </lineage>
</organism>
<accession>A8F4T8</accession>
<name>RS4_PSELT</name>
<keyword id="KW-1185">Reference proteome</keyword>
<keyword id="KW-0687">Ribonucleoprotein</keyword>
<keyword id="KW-0689">Ribosomal protein</keyword>
<keyword id="KW-0694">RNA-binding</keyword>
<keyword id="KW-0699">rRNA-binding</keyword>
<proteinExistence type="inferred from homology"/>
<comment type="function">
    <text evidence="1">One of the primary rRNA binding proteins, it binds directly to 16S rRNA where it nucleates assembly of the body of the 30S subunit.</text>
</comment>
<comment type="function">
    <text evidence="1">With S5 and S12 plays an important role in translational accuracy.</text>
</comment>
<comment type="subunit">
    <text evidence="1">Part of the 30S ribosomal subunit. Contacts protein S5. The interaction surface between S4 and S5 is involved in control of translational fidelity.</text>
</comment>
<comment type="similarity">
    <text evidence="1">Belongs to the universal ribosomal protein uS4 family.</text>
</comment>
<gene>
    <name evidence="1" type="primary">rpsD</name>
    <name type="ordered locus">Tlet_0606</name>
</gene>
<dbReference type="EMBL" id="CP000812">
    <property type="protein sequence ID" value="ABV33172.1"/>
    <property type="molecule type" value="Genomic_DNA"/>
</dbReference>
<dbReference type="RefSeq" id="WP_012002653.1">
    <property type="nucleotide sequence ID" value="NZ_BSDV01000001.1"/>
</dbReference>
<dbReference type="SMR" id="A8F4T8"/>
<dbReference type="STRING" id="416591.Tlet_0606"/>
<dbReference type="KEGG" id="tle:Tlet_0606"/>
<dbReference type="eggNOG" id="COG0522">
    <property type="taxonomic scope" value="Bacteria"/>
</dbReference>
<dbReference type="HOGENOM" id="CLU_092403_0_2_0"/>
<dbReference type="OrthoDB" id="9803672at2"/>
<dbReference type="Proteomes" id="UP000002016">
    <property type="component" value="Chromosome"/>
</dbReference>
<dbReference type="GO" id="GO:0015935">
    <property type="term" value="C:small ribosomal subunit"/>
    <property type="evidence" value="ECO:0007669"/>
    <property type="project" value="InterPro"/>
</dbReference>
<dbReference type="GO" id="GO:0019843">
    <property type="term" value="F:rRNA binding"/>
    <property type="evidence" value="ECO:0007669"/>
    <property type="project" value="UniProtKB-UniRule"/>
</dbReference>
<dbReference type="GO" id="GO:0003735">
    <property type="term" value="F:structural constituent of ribosome"/>
    <property type="evidence" value="ECO:0007669"/>
    <property type="project" value="InterPro"/>
</dbReference>
<dbReference type="GO" id="GO:0042274">
    <property type="term" value="P:ribosomal small subunit biogenesis"/>
    <property type="evidence" value="ECO:0007669"/>
    <property type="project" value="TreeGrafter"/>
</dbReference>
<dbReference type="GO" id="GO:0006412">
    <property type="term" value="P:translation"/>
    <property type="evidence" value="ECO:0007669"/>
    <property type="project" value="UniProtKB-UniRule"/>
</dbReference>
<dbReference type="CDD" id="cd00165">
    <property type="entry name" value="S4"/>
    <property type="match status" value="1"/>
</dbReference>
<dbReference type="FunFam" id="1.10.1050.10:FF:000001">
    <property type="entry name" value="30S ribosomal protein S4"/>
    <property type="match status" value="1"/>
</dbReference>
<dbReference type="FunFam" id="3.10.290.10:FF:000001">
    <property type="entry name" value="30S ribosomal protein S4"/>
    <property type="match status" value="1"/>
</dbReference>
<dbReference type="Gene3D" id="1.10.1050.10">
    <property type="entry name" value="Ribosomal Protein S4 Delta 41, Chain A, domain 1"/>
    <property type="match status" value="1"/>
</dbReference>
<dbReference type="Gene3D" id="3.10.290.10">
    <property type="entry name" value="RNA-binding S4 domain"/>
    <property type="match status" value="1"/>
</dbReference>
<dbReference type="HAMAP" id="MF_01306_B">
    <property type="entry name" value="Ribosomal_uS4_B"/>
    <property type="match status" value="1"/>
</dbReference>
<dbReference type="InterPro" id="IPR022801">
    <property type="entry name" value="Ribosomal_uS4"/>
</dbReference>
<dbReference type="InterPro" id="IPR005709">
    <property type="entry name" value="Ribosomal_uS4_bac-type"/>
</dbReference>
<dbReference type="InterPro" id="IPR001912">
    <property type="entry name" value="Ribosomal_uS4_N"/>
</dbReference>
<dbReference type="InterPro" id="IPR002942">
    <property type="entry name" value="S4_RNA-bd"/>
</dbReference>
<dbReference type="InterPro" id="IPR036986">
    <property type="entry name" value="S4_RNA-bd_sf"/>
</dbReference>
<dbReference type="NCBIfam" id="NF003717">
    <property type="entry name" value="PRK05327.1"/>
    <property type="match status" value="1"/>
</dbReference>
<dbReference type="NCBIfam" id="TIGR01017">
    <property type="entry name" value="rpsD_bact"/>
    <property type="match status" value="1"/>
</dbReference>
<dbReference type="PANTHER" id="PTHR11831">
    <property type="entry name" value="30S 40S RIBOSOMAL PROTEIN"/>
    <property type="match status" value="1"/>
</dbReference>
<dbReference type="PANTHER" id="PTHR11831:SF4">
    <property type="entry name" value="SMALL RIBOSOMAL SUBUNIT PROTEIN US4M"/>
    <property type="match status" value="1"/>
</dbReference>
<dbReference type="Pfam" id="PF00163">
    <property type="entry name" value="Ribosomal_S4"/>
    <property type="match status" value="1"/>
</dbReference>
<dbReference type="Pfam" id="PF01479">
    <property type="entry name" value="S4"/>
    <property type="match status" value="1"/>
</dbReference>
<dbReference type="SMART" id="SM01390">
    <property type="entry name" value="Ribosomal_S4"/>
    <property type="match status" value="1"/>
</dbReference>
<dbReference type="SMART" id="SM00363">
    <property type="entry name" value="S4"/>
    <property type="match status" value="1"/>
</dbReference>
<dbReference type="SUPFAM" id="SSF55174">
    <property type="entry name" value="Alpha-L RNA-binding motif"/>
    <property type="match status" value="1"/>
</dbReference>
<dbReference type="PROSITE" id="PS50889">
    <property type="entry name" value="S4"/>
    <property type="match status" value="1"/>
</dbReference>
<protein>
    <recommendedName>
        <fullName evidence="1">Small ribosomal subunit protein uS4</fullName>
    </recommendedName>
    <alternativeName>
        <fullName evidence="2">30S ribosomal protein S4</fullName>
    </alternativeName>
</protein>
<feature type="chain" id="PRO_0000322347" description="Small ribosomal subunit protein uS4">
    <location>
        <begin position="1"/>
        <end position="209"/>
    </location>
</feature>
<feature type="domain" description="S4 RNA-binding" evidence="1">
    <location>
        <begin position="98"/>
        <end position="158"/>
    </location>
</feature>
<sequence>MARYTGPICRLCRREGMKLYLKGERCFTEHCAFDKRPYAPGDHGRQRGKLSQYGTQLRAKQVMRVIYGIPERQFEHYFEKALGMSGDTRENLVRLVESRVDNIVYRLGFAISRRQARQLVTHGHFSVNGVKIDIPSYKLRPGDIVEVREKSRSLAAIKHAVESSKDRTQVPWVEVDFDSYRGTFLRLPNLEEVTDLPVDVQAIVEFYSR</sequence>
<evidence type="ECO:0000255" key="1">
    <source>
        <dbReference type="HAMAP-Rule" id="MF_01306"/>
    </source>
</evidence>
<evidence type="ECO:0000305" key="2"/>
<reference key="1">
    <citation type="submission" date="2007-08" db="EMBL/GenBank/DDBJ databases">
        <title>Complete sequence of Thermotoga lettingae TMO.</title>
        <authorList>
            <consortium name="US DOE Joint Genome Institute"/>
            <person name="Copeland A."/>
            <person name="Lucas S."/>
            <person name="Lapidus A."/>
            <person name="Barry K."/>
            <person name="Glavina del Rio T."/>
            <person name="Dalin E."/>
            <person name="Tice H."/>
            <person name="Pitluck S."/>
            <person name="Foster B."/>
            <person name="Bruce D."/>
            <person name="Schmutz J."/>
            <person name="Larimer F."/>
            <person name="Land M."/>
            <person name="Hauser L."/>
            <person name="Kyrpides N."/>
            <person name="Mikhailova N."/>
            <person name="Nelson K."/>
            <person name="Gogarten J.P."/>
            <person name="Noll K."/>
            <person name="Richardson P."/>
        </authorList>
    </citation>
    <scope>NUCLEOTIDE SEQUENCE [LARGE SCALE GENOMIC DNA]</scope>
    <source>
        <strain>ATCC BAA-301 / DSM 14385 / NBRC 107922 / TMO</strain>
    </source>
</reference>